<reference key="1">
    <citation type="journal article" date="1990" name="FEMS Microbiol. Lett.">
        <title>Nucleotide sequence of the fosB gene conferring fosfomycin resistance in Staphylococcus epidermidis.</title>
        <authorList>
            <person name="Zilhao R."/>
            <person name="Courvalin P."/>
        </authorList>
    </citation>
    <scope>NUCLEOTIDE SEQUENCE [GENOMIC DNA]</scope>
    <source>
        <strain>BM2641</strain>
    </source>
</reference>
<dbReference type="EC" id="2.5.1.-" evidence="1"/>
<dbReference type="EMBL" id="X54227">
    <property type="protein sequence ID" value="CAA38136.1"/>
    <property type="molecule type" value="Genomic_DNA"/>
</dbReference>
<dbReference type="PIR" id="B48175">
    <property type="entry name" value="B48175"/>
</dbReference>
<dbReference type="RefSeq" id="WP_032488468.1">
    <property type="nucleotide sequence ID" value="NG_050410.1"/>
</dbReference>
<dbReference type="SMR" id="Q03377"/>
<dbReference type="GO" id="GO:0005737">
    <property type="term" value="C:cytoplasm"/>
    <property type="evidence" value="ECO:0007669"/>
    <property type="project" value="UniProtKB-SubCell"/>
</dbReference>
<dbReference type="GO" id="GO:0000287">
    <property type="term" value="F:magnesium ion binding"/>
    <property type="evidence" value="ECO:0007669"/>
    <property type="project" value="UniProtKB-UniRule"/>
</dbReference>
<dbReference type="GO" id="GO:0016765">
    <property type="term" value="F:transferase activity, transferring alkyl or aryl (other than methyl) groups"/>
    <property type="evidence" value="ECO:0007669"/>
    <property type="project" value="UniProtKB-UniRule"/>
</dbReference>
<dbReference type="GO" id="GO:0046677">
    <property type="term" value="P:response to antibiotic"/>
    <property type="evidence" value="ECO:0007669"/>
    <property type="project" value="UniProtKB-UniRule"/>
</dbReference>
<dbReference type="Gene3D" id="3.10.180.10">
    <property type="entry name" value="2,3-Dihydroxybiphenyl 1,2-Dioxygenase, domain 1"/>
    <property type="match status" value="1"/>
</dbReference>
<dbReference type="HAMAP" id="MF_01512">
    <property type="entry name" value="FosB"/>
    <property type="match status" value="1"/>
</dbReference>
<dbReference type="InterPro" id="IPR051332">
    <property type="entry name" value="Fosfomycin_Res_Enzymes"/>
</dbReference>
<dbReference type="InterPro" id="IPR029068">
    <property type="entry name" value="Glyas_Bleomycin-R_OHBP_Dase"/>
</dbReference>
<dbReference type="InterPro" id="IPR004360">
    <property type="entry name" value="Glyas_Fos-R_dOase_dom"/>
</dbReference>
<dbReference type="InterPro" id="IPR022858">
    <property type="entry name" value="Metallothiol_Trafse_FosB"/>
</dbReference>
<dbReference type="InterPro" id="IPR037523">
    <property type="entry name" value="VOC"/>
</dbReference>
<dbReference type="NCBIfam" id="NF000493">
    <property type="entry name" value="Fos_BSH"/>
    <property type="match status" value="1"/>
</dbReference>
<dbReference type="NCBIfam" id="NF000085">
    <property type="entry name" value="Fos_BSH_Saur"/>
    <property type="match status" value="1"/>
</dbReference>
<dbReference type="NCBIfam" id="NF003152">
    <property type="entry name" value="PRK04101.1"/>
    <property type="match status" value="1"/>
</dbReference>
<dbReference type="PANTHER" id="PTHR36113:SF6">
    <property type="entry name" value="FOSFOMYCIN RESISTANCE PROTEIN FOSX"/>
    <property type="match status" value="1"/>
</dbReference>
<dbReference type="PANTHER" id="PTHR36113">
    <property type="entry name" value="LYASE, PUTATIVE-RELATED-RELATED"/>
    <property type="match status" value="1"/>
</dbReference>
<dbReference type="Pfam" id="PF00903">
    <property type="entry name" value="Glyoxalase"/>
    <property type="match status" value="1"/>
</dbReference>
<dbReference type="SUPFAM" id="SSF54593">
    <property type="entry name" value="Glyoxalase/Bleomycin resistance protein/Dihydroxybiphenyl dioxygenase"/>
    <property type="match status" value="1"/>
</dbReference>
<dbReference type="PROSITE" id="PS51819">
    <property type="entry name" value="VOC"/>
    <property type="match status" value="1"/>
</dbReference>
<evidence type="ECO:0000255" key="1">
    <source>
        <dbReference type="HAMAP-Rule" id="MF_01512"/>
    </source>
</evidence>
<evidence type="ECO:0000255" key="2">
    <source>
        <dbReference type="PROSITE-ProRule" id="PRU01163"/>
    </source>
</evidence>
<keyword id="KW-0046">Antibiotic resistance</keyword>
<keyword id="KW-0963">Cytoplasm</keyword>
<keyword id="KW-0460">Magnesium</keyword>
<keyword id="KW-0479">Metal-binding</keyword>
<keyword id="KW-0614">Plasmid</keyword>
<keyword id="KW-0808">Transferase</keyword>
<accession>Q03377</accession>
<protein>
    <recommendedName>
        <fullName evidence="1">Metallothiol transferase FosB</fullName>
        <ecNumber evidence="1">2.5.1.-</ecNumber>
    </recommendedName>
    <alternativeName>
        <fullName evidence="1">Fosfomycin resistance protein</fullName>
    </alternativeName>
</protein>
<geneLocation type="plasmid">
    <name>pIP1842</name>
</geneLocation>
<gene>
    <name evidence="1" type="primary">fosB</name>
</gene>
<feature type="chain" id="PRO_0000164038" description="Metallothiol transferase FosB">
    <location>
        <begin position="1"/>
        <end position="139"/>
    </location>
</feature>
<feature type="domain" description="VOC" evidence="2">
    <location>
        <begin position="4"/>
        <end position="119"/>
    </location>
</feature>
<feature type="active site" description="Proton donor/acceptor" evidence="2">
    <location>
        <position position="115"/>
    </location>
</feature>
<feature type="binding site" evidence="1">
    <location>
        <position position="7"/>
    </location>
    <ligand>
        <name>Mg(2+)</name>
        <dbReference type="ChEBI" id="CHEBI:18420"/>
    </ligand>
</feature>
<feature type="binding site" evidence="1">
    <location>
        <position position="66"/>
    </location>
    <ligand>
        <name>Mg(2+)</name>
        <dbReference type="ChEBI" id="CHEBI:18420"/>
    </ligand>
</feature>
<feature type="binding site" evidence="1">
    <location>
        <position position="115"/>
    </location>
    <ligand>
        <name>Mg(2+)</name>
        <dbReference type="ChEBI" id="CHEBI:18420"/>
    </ligand>
</feature>
<organism>
    <name type="scientific">Staphylococcus epidermidis</name>
    <dbReference type="NCBI Taxonomy" id="1282"/>
    <lineage>
        <taxon>Bacteria</taxon>
        <taxon>Bacillati</taxon>
        <taxon>Bacillota</taxon>
        <taxon>Bacilli</taxon>
        <taxon>Bacillales</taxon>
        <taxon>Staphylococcaceae</taxon>
        <taxon>Staphylococcus</taxon>
    </lineage>
</organism>
<comment type="function">
    <text evidence="1">Metallothiol transferase which confers resistance to fosfomycin by catalyzing the addition of a thiol cofactor to fosfomycin. L-cysteine is probably the physiological thiol donor.</text>
</comment>
<comment type="cofactor">
    <cofactor evidence="1">
        <name>Mg(2+)</name>
        <dbReference type="ChEBI" id="CHEBI:18420"/>
    </cofactor>
</comment>
<comment type="subunit">
    <text evidence="1">Homodimer.</text>
</comment>
<comment type="subcellular location">
    <subcellularLocation>
        <location evidence="1">Cytoplasm</location>
    </subcellularLocation>
</comment>
<comment type="similarity">
    <text evidence="1">Belongs to the fosfomycin resistance protein family. FosB subfamily.</text>
</comment>
<sequence length="139" mass="16363">MIKGINHITYSVSNIAKSIEFYRDILGADILVEGETSAYFNLGGIWLALNEEKNIPRSEIKYSYTHIAFTISDNDFEDWYIWLKENEVNILEGRDRDIRDKKSIYFTDLDGHKLELHTGSLEDRLSYYKEAKPHMNFYI</sequence>
<proteinExistence type="inferred from homology"/>
<name>FOSB_STAEP</name>